<comment type="function">
    <text evidence="1">Usually encoded in the trnK tRNA gene intron. Probably assists in splicing its own and other chloroplast group II introns.</text>
</comment>
<comment type="subcellular location">
    <subcellularLocation>
        <location>Plastid</location>
        <location>Chloroplast</location>
    </subcellularLocation>
</comment>
<comment type="similarity">
    <text evidence="1">Belongs to the intron maturase 2 family. MatK subfamily.</text>
</comment>
<accession>Q9MUW8</accession>
<organism>
    <name type="scientific">Panicum capillare</name>
    <name type="common">Witchgrass</name>
    <name type="synonym">Panicum barbipulvinatum</name>
    <dbReference type="NCBI Taxonomy" id="33109"/>
    <lineage>
        <taxon>Eukaryota</taxon>
        <taxon>Viridiplantae</taxon>
        <taxon>Streptophyta</taxon>
        <taxon>Embryophyta</taxon>
        <taxon>Tracheophyta</taxon>
        <taxon>Spermatophyta</taxon>
        <taxon>Magnoliopsida</taxon>
        <taxon>Liliopsida</taxon>
        <taxon>Poales</taxon>
        <taxon>Poaceae</taxon>
        <taxon>PACMAD clade</taxon>
        <taxon>Panicoideae</taxon>
        <taxon>Panicodae</taxon>
        <taxon>Paniceae</taxon>
        <taxon>Panicinae</taxon>
        <taxon>Panicum</taxon>
        <taxon>Panicum sect. Panicum</taxon>
    </lineage>
</organism>
<name>MATK_PANCA</name>
<reference key="1">
    <citation type="journal article" date="1999" name="Ann. Mo. Bot. Gard.">
        <title>Phylogeny of Poaceae inferred from matK sequences.</title>
        <authorList>
            <person name="Hilu K.W."/>
            <person name="Alice L.A."/>
            <person name="Liang H."/>
        </authorList>
    </citation>
    <scope>NUCLEOTIDE SEQUENCE [GENOMIC DNA]</scope>
</reference>
<proteinExistence type="inferred from homology"/>
<keyword id="KW-0150">Chloroplast</keyword>
<keyword id="KW-0507">mRNA processing</keyword>
<keyword id="KW-0934">Plastid</keyword>
<keyword id="KW-0694">RNA-binding</keyword>
<keyword id="KW-0819">tRNA processing</keyword>
<dbReference type="EMBL" id="AF164423">
    <property type="protein sequence ID" value="AAF66210.1"/>
    <property type="molecule type" value="Genomic_DNA"/>
</dbReference>
<dbReference type="RefSeq" id="YP_009260548.1">
    <property type="nucleotide sequence ID" value="NC_030493.1"/>
</dbReference>
<dbReference type="GeneID" id="32982893"/>
<dbReference type="GO" id="GO:0009507">
    <property type="term" value="C:chloroplast"/>
    <property type="evidence" value="ECO:0007669"/>
    <property type="project" value="UniProtKB-SubCell"/>
</dbReference>
<dbReference type="GO" id="GO:0003723">
    <property type="term" value="F:RNA binding"/>
    <property type="evidence" value="ECO:0007669"/>
    <property type="project" value="UniProtKB-KW"/>
</dbReference>
<dbReference type="GO" id="GO:0006397">
    <property type="term" value="P:mRNA processing"/>
    <property type="evidence" value="ECO:0007669"/>
    <property type="project" value="UniProtKB-KW"/>
</dbReference>
<dbReference type="GO" id="GO:0008380">
    <property type="term" value="P:RNA splicing"/>
    <property type="evidence" value="ECO:0007669"/>
    <property type="project" value="UniProtKB-UniRule"/>
</dbReference>
<dbReference type="GO" id="GO:0008033">
    <property type="term" value="P:tRNA processing"/>
    <property type="evidence" value="ECO:0007669"/>
    <property type="project" value="UniProtKB-KW"/>
</dbReference>
<dbReference type="HAMAP" id="MF_01390">
    <property type="entry name" value="MatK"/>
    <property type="match status" value="1"/>
</dbReference>
<dbReference type="InterPro" id="IPR024937">
    <property type="entry name" value="Domain_X"/>
</dbReference>
<dbReference type="InterPro" id="IPR002866">
    <property type="entry name" value="Maturase_MatK"/>
</dbReference>
<dbReference type="InterPro" id="IPR024942">
    <property type="entry name" value="Maturase_MatK_N"/>
</dbReference>
<dbReference type="PANTHER" id="PTHR34811">
    <property type="entry name" value="MATURASE K"/>
    <property type="match status" value="1"/>
</dbReference>
<dbReference type="PANTHER" id="PTHR34811:SF1">
    <property type="entry name" value="MATURASE K"/>
    <property type="match status" value="1"/>
</dbReference>
<dbReference type="Pfam" id="PF01348">
    <property type="entry name" value="Intron_maturas2"/>
    <property type="match status" value="1"/>
</dbReference>
<dbReference type="Pfam" id="PF01824">
    <property type="entry name" value="MatK_N"/>
    <property type="match status" value="1"/>
</dbReference>
<feature type="chain" id="PRO_0000143575" description="Maturase K">
    <location>
        <begin position="1"/>
        <end position="513"/>
    </location>
</feature>
<evidence type="ECO:0000255" key="1">
    <source>
        <dbReference type="HAMAP-Rule" id="MF_01390"/>
    </source>
</evidence>
<sequence>MEKFEGYSEKQKSRQQYFVYPLLFQEYIYAFAHDYGLNGAEPVEIFGCNNKKFSSLLVKRLIIRMYQQNFWINSVNQPNQDRLLDHSNYFYLEFYSQILSEGFAIVVEIPLSLGQPSCSEEKEIPKFQNLQSIHSIFPFLEDKFLHLHYLSHIEIPYPIHLEILVQLLEYRIQDVPSLHLLRFFLNYYSNWNSLITSMKSYFLFKKENKRLFRFLYNSYVSEYEFFLLFLRKQSSCLRLTSSGTFLERVHFSGKMEHFWVMYPGFFRKTIWFFMDPLIHYVRYQGKAILASKGTLLLKKKWKSYLVNFSQYFLSFWTQPQRIRLNQLTNSCFDFLGYLPSVPINTLLVRNQMLENSFLIDTRMKKFDTTVPATSLVGSLSKAQFCTGSGHPISKPVWTDLSDWDILDRFGRICRNLFHYHSGSSKKRILYRLKYILRLSCARTLARKHKSTVRTFMQRLGSVFLEEFFTEEEQVFCLMFTKTTRFSFNGSHSERIWYLDIIRINDLVNPLTLN</sequence>
<geneLocation type="chloroplast"/>
<gene>
    <name evidence="1" type="primary">matK</name>
</gene>
<protein>
    <recommendedName>
        <fullName evidence="1">Maturase K</fullName>
    </recommendedName>
    <alternativeName>
        <fullName evidence="1">Intron maturase</fullName>
    </alternativeName>
</protein>